<feature type="chain" id="PRO_0000076677" description="Aconitate hydratase B">
    <location>
        <begin position="1"/>
        <end position="852"/>
    </location>
</feature>
<feature type="binding site" evidence="1">
    <location>
        <position position="194"/>
    </location>
    <ligand>
        <name>substrate</name>
    </ligand>
</feature>
<feature type="binding site" evidence="1">
    <location>
        <begin position="237"/>
        <end position="239"/>
    </location>
    <ligand>
        <name>substrate</name>
    </ligand>
</feature>
<feature type="binding site" evidence="1">
    <location>
        <begin position="405"/>
        <end position="407"/>
    </location>
    <ligand>
        <name>substrate</name>
    </ligand>
</feature>
<feature type="binding site" evidence="1">
    <location>
        <position position="489"/>
    </location>
    <ligand>
        <name>substrate</name>
    </ligand>
</feature>
<feature type="binding site" evidence="1">
    <location>
        <position position="708"/>
    </location>
    <ligand>
        <name>[4Fe-4S] cluster</name>
        <dbReference type="ChEBI" id="CHEBI:49883"/>
    </ligand>
</feature>
<feature type="binding site" evidence="1">
    <location>
        <position position="766"/>
    </location>
    <ligand>
        <name>[4Fe-4S] cluster</name>
        <dbReference type="ChEBI" id="CHEBI:49883"/>
    </ligand>
</feature>
<feature type="binding site" evidence="1">
    <location>
        <position position="769"/>
    </location>
    <ligand>
        <name>[4Fe-4S] cluster</name>
        <dbReference type="ChEBI" id="CHEBI:49883"/>
    </ligand>
</feature>
<feature type="binding site" evidence="1">
    <location>
        <position position="788"/>
    </location>
    <ligand>
        <name>substrate</name>
    </ligand>
</feature>
<feature type="binding site" evidence="1">
    <location>
        <position position="793"/>
    </location>
    <ligand>
        <name>substrate</name>
    </ligand>
</feature>
<organism>
    <name type="scientific">Helicobacter pylori (strain J99 / ATCC 700824)</name>
    <name type="common">Campylobacter pylori J99</name>
    <dbReference type="NCBI Taxonomy" id="85963"/>
    <lineage>
        <taxon>Bacteria</taxon>
        <taxon>Pseudomonadati</taxon>
        <taxon>Campylobacterota</taxon>
        <taxon>Epsilonproteobacteria</taxon>
        <taxon>Campylobacterales</taxon>
        <taxon>Helicobacteraceae</taxon>
        <taxon>Helicobacter</taxon>
    </lineage>
</organism>
<dbReference type="EC" id="4.2.1.3" evidence="1"/>
<dbReference type="EC" id="4.2.1.99" evidence="1"/>
<dbReference type="EMBL" id="AE001439">
    <property type="protein sequence ID" value="AAD06299.1"/>
    <property type="molecule type" value="Genomic_DNA"/>
</dbReference>
<dbReference type="PIR" id="D71896">
    <property type="entry name" value="D71896"/>
</dbReference>
<dbReference type="RefSeq" id="WP_010882558.1">
    <property type="nucleotide sequence ID" value="NC_000921.1"/>
</dbReference>
<dbReference type="SMR" id="Q9ZL64"/>
<dbReference type="KEGG" id="hpj:jhp_0716"/>
<dbReference type="PATRIC" id="fig|85963.30.peg.261"/>
<dbReference type="eggNOG" id="COG1049">
    <property type="taxonomic scope" value="Bacteria"/>
</dbReference>
<dbReference type="UniPathway" id="UPA00223">
    <property type="reaction ID" value="UER00718"/>
</dbReference>
<dbReference type="UniPathway" id="UPA00946"/>
<dbReference type="Proteomes" id="UP000000804">
    <property type="component" value="Chromosome"/>
</dbReference>
<dbReference type="GO" id="GO:0005829">
    <property type="term" value="C:cytosol"/>
    <property type="evidence" value="ECO:0007669"/>
    <property type="project" value="InterPro"/>
</dbReference>
<dbReference type="GO" id="GO:0047456">
    <property type="term" value="F:2-methylisocitrate dehydratase activity"/>
    <property type="evidence" value="ECO:0000250"/>
    <property type="project" value="UniProtKB"/>
</dbReference>
<dbReference type="GO" id="GO:0051539">
    <property type="term" value="F:4 iron, 4 sulfur cluster binding"/>
    <property type="evidence" value="ECO:0000250"/>
    <property type="project" value="UniProtKB"/>
</dbReference>
<dbReference type="GO" id="GO:0003994">
    <property type="term" value="F:aconitate hydratase activity"/>
    <property type="evidence" value="ECO:0000250"/>
    <property type="project" value="UniProtKB"/>
</dbReference>
<dbReference type="GO" id="GO:0046872">
    <property type="term" value="F:metal ion binding"/>
    <property type="evidence" value="ECO:0007669"/>
    <property type="project" value="UniProtKB-KW"/>
</dbReference>
<dbReference type="GO" id="GO:0003730">
    <property type="term" value="F:mRNA 3'-UTR binding"/>
    <property type="evidence" value="ECO:0000250"/>
    <property type="project" value="UniProtKB"/>
</dbReference>
<dbReference type="GO" id="GO:0003729">
    <property type="term" value="F:mRNA binding"/>
    <property type="evidence" value="ECO:0000250"/>
    <property type="project" value="UniProtKB"/>
</dbReference>
<dbReference type="GO" id="GO:0019629">
    <property type="term" value="P:propionate catabolic process, 2-methylcitrate cycle"/>
    <property type="evidence" value="ECO:0000250"/>
    <property type="project" value="UniProtKB"/>
</dbReference>
<dbReference type="GO" id="GO:0006099">
    <property type="term" value="P:tricarboxylic acid cycle"/>
    <property type="evidence" value="ECO:0000250"/>
    <property type="project" value="UniProtKB"/>
</dbReference>
<dbReference type="CDD" id="cd01581">
    <property type="entry name" value="AcnB"/>
    <property type="match status" value="1"/>
</dbReference>
<dbReference type="CDD" id="cd01576">
    <property type="entry name" value="AcnB_Swivel"/>
    <property type="match status" value="1"/>
</dbReference>
<dbReference type="FunFam" id="3.20.19.10:FF:000004">
    <property type="entry name" value="Aconitate hydratase B"/>
    <property type="match status" value="1"/>
</dbReference>
<dbReference type="Gene3D" id="3.40.1060.10">
    <property type="entry name" value="Aconitase, Domain 2"/>
    <property type="match status" value="1"/>
</dbReference>
<dbReference type="Gene3D" id="3.30.499.10">
    <property type="entry name" value="Aconitase, domain 3"/>
    <property type="match status" value="2"/>
</dbReference>
<dbReference type="Gene3D" id="3.20.19.10">
    <property type="entry name" value="Aconitase, domain 4"/>
    <property type="match status" value="1"/>
</dbReference>
<dbReference type="Gene3D" id="1.25.40.310">
    <property type="entry name" value="Aconitate B, HEAT-like domain"/>
    <property type="match status" value="1"/>
</dbReference>
<dbReference type="InterPro" id="IPR015931">
    <property type="entry name" value="Acnase/IPM_dHydase_lsu_aba_1/3"/>
</dbReference>
<dbReference type="InterPro" id="IPR001030">
    <property type="entry name" value="Acoase/IPM_deHydtase_lsu_aba"/>
</dbReference>
<dbReference type="InterPro" id="IPR015928">
    <property type="entry name" value="Aconitase/3IPM_dehydase_swvl"/>
</dbReference>
<dbReference type="InterPro" id="IPR050926">
    <property type="entry name" value="Aconitase/IPM_isomerase"/>
</dbReference>
<dbReference type="InterPro" id="IPR018136">
    <property type="entry name" value="Aconitase_4Fe-4S_BS"/>
</dbReference>
<dbReference type="InterPro" id="IPR036008">
    <property type="entry name" value="Aconitase_4Fe-4S_dom"/>
</dbReference>
<dbReference type="InterPro" id="IPR004406">
    <property type="entry name" value="Aconitase_B"/>
</dbReference>
<dbReference type="InterPro" id="IPR015933">
    <property type="entry name" value="Aconitase_B_HEAT-like_dom"/>
</dbReference>
<dbReference type="InterPro" id="IPR036288">
    <property type="entry name" value="Aconitase_B_HEAT-like_dom_sf"/>
</dbReference>
<dbReference type="InterPro" id="IPR015929">
    <property type="entry name" value="Aconitase_B_swivel"/>
</dbReference>
<dbReference type="InterPro" id="IPR015932">
    <property type="entry name" value="Aconitase_dom2"/>
</dbReference>
<dbReference type="NCBIfam" id="TIGR00117">
    <property type="entry name" value="acnB"/>
    <property type="match status" value="1"/>
</dbReference>
<dbReference type="NCBIfam" id="NF006690">
    <property type="entry name" value="PRK09238.1"/>
    <property type="match status" value="1"/>
</dbReference>
<dbReference type="PANTHER" id="PTHR43160">
    <property type="entry name" value="ACONITATE HYDRATASE B"/>
    <property type="match status" value="1"/>
</dbReference>
<dbReference type="PANTHER" id="PTHR43160:SF4">
    <property type="entry name" value="ACONITATE HYDRATASE B"/>
    <property type="match status" value="1"/>
</dbReference>
<dbReference type="Pfam" id="PF00330">
    <property type="entry name" value="Aconitase"/>
    <property type="match status" value="1"/>
</dbReference>
<dbReference type="Pfam" id="PF06434">
    <property type="entry name" value="Aconitase_2_N"/>
    <property type="match status" value="1"/>
</dbReference>
<dbReference type="Pfam" id="PF11791">
    <property type="entry name" value="Aconitase_B_N"/>
    <property type="match status" value="1"/>
</dbReference>
<dbReference type="PIRSF" id="PIRSF036687">
    <property type="entry name" value="AcnB"/>
    <property type="match status" value="1"/>
</dbReference>
<dbReference type="SUPFAM" id="SSF74778">
    <property type="entry name" value="Aconitase B, N-terminal domain"/>
    <property type="match status" value="1"/>
</dbReference>
<dbReference type="SUPFAM" id="SSF53732">
    <property type="entry name" value="Aconitase iron-sulfur domain"/>
    <property type="match status" value="1"/>
</dbReference>
<dbReference type="SUPFAM" id="SSF52016">
    <property type="entry name" value="LeuD/IlvD-like"/>
    <property type="match status" value="1"/>
</dbReference>
<dbReference type="PROSITE" id="PS00450">
    <property type="entry name" value="ACONITASE_1"/>
    <property type="match status" value="1"/>
</dbReference>
<dbReference type="PROSITE" id="PS01244">
    <property type="entry name" value="ACONITASE_2"/>
    <property type="match status" value="1"/>
</dbReference>
<name>ACNB_HELPJ</name>
<keyword id="KW-0004">4Fe-4S</keyword>
<keyword id="KW-0408">Iron</keyword>
<keyword id="KW-0411">Iron-sulfur</keyword>
<keyword id="KW-0456">Lyase</keyword>
<keyword id="KW-0479">Metal-binding</keyword>
<keyword id="KW-0694">RNA-binding</keyword>
<keyword id="KW-0816">Tricarboxylic acid cycle</keyword>
<proteinExistence type="inferred from homology"/>
<accession>Q9ZL64</accession>
<gene>
    <name type="primary">acnB</name>
    <name type="ordered locus">jhp_0716</name>
</gene>
<evidence type="ECO:0000250" key="1">
    <source>
        <dbReference type="UniProtKB" id="P36683"/>
    </source>
</evidence>
<evidence type="ECO:0000305" key="2"/>
<sequence>MKDFLEDYKKSVLERKSEGIPPLPLNAKQVEAVVEILMKDPTNAAFAKELLIHRVSPGVDEGAKVKAEFLAQLSQKKLECPHISALEATTLLGTMLGGYNVEPLIVGLESQDKNIAKESAKALKTTLLVYGSFDKIAAMSKTNALAKEVLESWANAEWFLNKEPLNECIEACVFKIDGETNTDDLSPASDAFTRSDIPLHAKAMLKNRIENYEQRIEAIKTKGVPVAYVGDVVGTGSSRKSATNSIMWHFGKDIPFVPNKRSGGIVIGGVIAPIFFATCEDSGALPIVADVKDLKEGDIIKIYPYKGEITLNDKVVSTFKLEPETLLDEVRASGRIPLIIGRGLTNKARKFLGLGESEAFKKPSAPKSDAKGYTLAQKIVGHACGVKGILPGAYCEPKVTTVGSQDTTGAMTRDEVKELASLKFDAPFVLQSFCHTAAYPKPSDVSLHATLPGFITQRGGVALHPGDGVIHTWLNRMGLPDTLGTGGDSHTRFPLGISFPAGSGLVAFAAVTGTMPLNMPESVLVRFKGEMNPGITLRDLVNAIPYYAIKKGLLTVEKKGKINVFNGRILEIEGLPDIKMEQAFELSDASAERSAAACVVRLNKEPMIEYLKSNIKLIDEMIASGYEDKETLKKRRDAMQAWVDKPVLLEPDSNAQYAAVIEIDVAEITEPILACPNDPDDVATLSEVLADTTGKRPHAIDEVFIGSCMTNIGHFRAFGEIVKNAPPSQARLWVVPPSKMDEQELINEGYYAIFGAAGARTEVPGCSLCMGNQARVRDNAVVFSTSTRNFDNRMGRGAKVYLGSAELGAACALLGRIPTKEEYMNLVSEKLESQKDKIYRYMNFNLMENFRL</sequence>
<comment type="function">
    <text evidence="1">Involved in the catabolism of short chain fatty acids (SCFA) via the tricarboxylic acid (TCA)(acetyl degradation route) and probably via the 2-methylcitrate cycle I (propionate degradation route). Catalyzes the reversible isomerization of citrate to isocitrate via cis-aconitate. Catalyzes the hydration of 2-methyl-cis-aconitate to yield (2R,3S)-2-methylisocitrate. The apo form of AcnB functions as a RNA-binding regulatory protein.</text>
</comment>
<comment type="catalytic activity">
    <reaction evidence="1">
        <text>citrate = D-threo-isocitrate</text>
        <dbReference type="Rhea" id="RHEA:10336"/>
        <dbReference type="ChEBI" id="CHEBI:15562"/>
        <dbReference type="ChEBI" id="CHEBI:16947"/>
        <dbReference type="EC" id="4.2.1.3"/>
    </reaction>
</comment>
<comment type="catalytic activity">
    <reaction evidence="1">
        <text>(2S,3R)-3-hydroxybutane-1,2,3-tricarboxylate = 2-methyl-cis-aconitate + H2O</text>
        <dbReference type="Rhea" id="RHEA:17941"/>
        <dbReference type="ChEBI" id="CHEBI:15377"/>
        <dbReference type="ChEBI" id="CHEBI:57429"/>
        <dbReference type="ChEBI" id="CHEBI:57872"/>
        <dbReference type="EC" id="4.2.1.99"/>
    </reaction>
</comment>
<comment type="cofactor">
    <cofactor evidence="1">
        <name>[4Fe-4S] cluster</name>
        <dbReference type="ChEBI" id="CHEBI:49883"/>
    </cofactor>
    <text evidence="1">Binds 1 [4Fe-4S] cluster per subunit.</text>
</comment>
<comment type="pathway">
    <text evidence="1">Carbohydrate metabolism; tricarboxylic acid cycle; isocitrate from oxaloacetate: step 2/2.</text>
</comment>
<comment type="pathway">
    <text evidence="1">Organic acid metabolism; propanoate degradation.</text>
</comment>
<comment type="subunit">
    <text evidence="1">Monomer.</text>
</comment>
<comment type="similarity">
    <text evidence="2">Belongs to the aconitase/IPM isomerase family.</text>
</comment>
<reference key="1">
    <citation type="journal article" date="1999" name="Nature">
        <title>Genomic sequence comparison of two unrelated isolates of the human gastric pathogen Helicobacter pylori.</title>
        <authorList>
            <person name="Alm R.A."/>
            <person name="Ling L.-S.L."/>
            <person name="Moir D.T."/>
            <person name="King B.L."/>
            <person name="Brown E.D."/>
            <person name="Doig P.C."/>
            <person name="Smith D.R."/>
            <person name="Noonan B."/>
            <person name="Guild B.C."/>
            <person name="deJonge B.L."/>
            <person name="Carmel G."/>
            <person name="Tummino P.J."/>
            <person name="Caruso A."/>
            <person name="Uria-Nickelsen M."/>
            <person name="Mills D.M."/>
            <person name="Ives C."/>
            <person name="Gibson R."/>
            <person name="Merberg D."/>
            <person name="Mills S.D."/>
            <person name="Jiang Q."/>
            <person name="Taylor D.E."/>
            <person name="Vovis G.F."/>
            <person name="Trust T.J."/>
        </authorList>
    </citation>
    <scope>NUCLEOTIDE SEQUENCE [LARGE SCALE GENOMIC DNA]</scope>
    <source>
        <strain>J99 / ATCC 700824</strain>
    </source>
</reference>
<protein>
    <recommendedName>
        <fullName evidence="1">Aconitate hydratase B</fullName>
        <shortName evidence="1">ACN</shortName>
        <shortName evidence="1">Aconitase</shortName>
        <ecNumber evidence="1">4.2.1.3</ecNumber>
    </recommendedName>
    <alternativeName>
        <fullName evidence="1">(2R,3S)-2-methylisocitrate dehydratase</fullName>
    </alternativeName>
    <alternativeName>
        <fullName evidence="1">(2S,3R)-3-hydroxybutane-1,2,3-tricarboxylate dehydratase</fullName>
    </alternativeName>
    <alternativeName>
        <fullName evidence="1">2-methyl-cis-aconitate hydratase</fullName>
        <ecNumber evidence="1">4.2.1.99</ecNumber>
    </alternativeName>
    <alternativeName>
        <fullName evidence="1">Iron-responsive protein-like</fullName>
        <shortName evidence="1">IRP-like</shortName>
    </alternativeName>
    <alternativeName>
        <fullName evidence="1">RNA-binding protein</fullName>
    </alternativeName>
</protein>